<proteinExistence type="evidence at transcript level"/>
<comment type="function">
    <text evidence="1">Plays an olfactory role that is not restricted to pheromone sensitivity.</text>
</comment>
<comment type="subcellular location">
    <subcellularLocation>
        <location evidence="1">Cell membrane</location>
        <topology evidence="1">Multi-pass membrane protein</topology>
    </subcellularLocation>
</comment>
<comment type="similarity">
    <text evidence="4">Belongs to the CD36 family.</text>
</comment>
<name>SNMP1_PLUXY</name>
<evidence type="ECO:0000250" key="1">
    <source>
        <dbReference type="UniProtKB" id="O02351"/>
    </source>
</evidence>
<evidence type="ECO:0000250" key="2">
    <source>
        <dbReference type="UniProtKB" id="P26201"/>
    </source>
</evidence>
<evidence type="ECO:0000255" key="3"/>
<evidence type="ECO:0000305" key="4"/>
<evidence type="ECO:0000312" key="5">
    <source>
        <dbReference type="EMBL" id="ADK66278.1"/>
    </source>
</evidence>
<sequence>MKLPKHLKFAAGAGGAFLFGILFGWVMFPAILKGQLKKEMALSKKTDVRKMWETIPFALNFKVYLYNYTNPEEVQKGGVPIIKEVGPYHFDEWKEKVEIEDHEEDDTITYKKRDTFYFNQEKSGPGLTGEEVITMPHVFMLAMATVVSREKPAMMNMIGKAINGIFDNPADVFIRVKALDIMFRGTMINCARTEFAPKAVCTALKKEAVNGLVMEPNNQFRFSLFGSRNGTIDPHVVTVKRGIKNVMDVGQVVAIDGKPQQDVWRDHCNEYQGTDGTVFPPFLTEHDRLQSFSGDLCRSFKPWYQKKSFYRGITTHRYIANIGDFANDPELNCFCDGPCPPKGLMDLMKCMKAPMYASMPHFLDSDPELLKNVKGLNPDVNEHGIEIDFEPISGTPMVANQRVQFNMQLLKHDKVELLNNLPDTIVPLFWIDEGLALNKTFVNMLKFQLFYPKKAVGVIKWLLVTFGGFGLIGCTIYHYKDRIMSFASSPGSAAVTKVKPEEVEQKDVSVIGQPQEPAKINM</sequence>
<protein>
    <recommendedName>
        <fullName>Sensory neuron membrane protein 1</fullName>
    </recommendedName>
</protein>
<dbReference type="EMBL" id="HM536984">
    <property type="protein sequence ID" value="ADK66278.1"/>
    <property type="molecule type" value="mRNA"/>
</dbReference>
<dbReference type="SMR" id="E2IHA6"/>
<dbReference type="GlyCosmos" id="E2IHA6">
    <property type="glycosylation" value="3 sites, No reported glycans"/>
</dbReference>
<dbReference type="GO" id="GO:0005737">
    <property type="term" value="C:cytoplasm"/>
    <property type="evidence" value="ECO:0007669"/>
    <property type="project" value="TreeGrafter"/>
</dbReference>
<dbReference type="GO" id="GO:0005886">
    <property type="term" value="C:plasma membrane"/>
    <property type="evidence" value="ECO:0007669"/>
    <property type="project" value="UniProtKB-SubCell"/>
</dbReference>
<dbReference type="GO" id="GO:0005044">
    <property type="term" value="F:scavenger receptor activity"/>
    <property type="evidence" value="ECO:0007669"/>
    <property type="project" value="TreeGrafter"/>
</dbReference>
<dbReference type="GO" id="GO:0007608">
    <property type="term" value="P:sensory perception of smell"/>
    <property type="evidence" value="ECO:0007669"/>
    <property type="project" value="UniProtKB-KW"/>
</dbReference>
<dbReference type="InterPro" id="IPR002159">
    <property type="entry name" value="CD36_fam"/>
</dbReference>
<dbReference type="PANTHER" id="PTHR11923">
    <property type="entry name" value="SCAVENGER RECEPTOR CLASS B TYPE-1 SR-B1"/>
    <property type="match status" value="1"/>
</dbReference>
<dbReference type="PANTHER" id="PTHR11923:SF69">
    <property type="entry name" value="SENSORY NEURON MEMBRANE PROTEIN 1"/>
    <property type="match status" value="1"/>
</dbReference>
<dbReference type="Pfam" id="PF01130">
    <property type="entry name" value="CD36"/>
    <property type="match status" value="1"/>
</dbReference>
<dbReference type="PRINTS" id="PR01609">
    <property type="entry name" value="CD36FAMILY"/>
</dbReference>
<keyword id="KW-1003">Cell membrane</keyword>
<keyword id="KW-1015">Disulfide bond</keyword>
<keyword id="KW-0325">Glycoprotein</keyword>
<keyword id="KW-0472">Membrane</keyword>
<keyword id="KW-0552">Olfaction</keyword>
<keyword id="KW-0675">Receptor</keyword>
<keyword id="KW-0716">Sensory transduction</keyword>
<keyword id="KW-0812">Transmembrane</keyword>
<keyword id="KW-1133">Transmembrane helix</keyword>
<feature type="chain" id="PRO_0000408256" description="Sensory neuron membrane protein 1">
    <location>
        <begin position="1"/>
        <end position="522"/>
    </location>
</feature>
<feature type="topological domain" description="Cytoplasmic" evidence="3">
    <location>
        <begin position="1"/>
        <end position="11"/>
    </location>
</feature>
<feature type="transmembrane region" description="Helical" evidence="3">
    <location>
        <begin position="12"/>
        <end position="32"/>
    </location>
</feature>
<feature type="topological domain" description="Extracellular" evidence="3">
    <location>
        <begin position="33"/>
        <end position="455"/>
    </location>
</feature>
<feature type="transmembrane region" description="Helical" evidence="3">
    <location>
        <begin position="456"/>
        <end position="476"/>
    </location>
</feature>
<feature type="topological domain" description="Cytoplasmic" evidence="3">
    <location>
        <begin position="477"/>
        <end position="522"/>
    </location>
</feature>
<feature type="glycosylation site" description="N-linked (GlcNAc...) asparagine" evidence="3">
    <location>
        <position position="67"/>
    </location>
</feature>
<feature type="glycosylation site" description="N-linked (GlcNAc...) asparagine" evidence="3">
    <location>
        <position position="229"/>
    </location>
</feature>
<feature type="glycosylation site" description="N-linked (GlcNAc...) asparagine" evidence="3">
    <location>
        <position position="438"/>
    </location>
</feature>
<feature type="disulfide bond" evidence="2">
    <location>
        <begin position="268"/>
        <end position="333"/>
    </location>
</feature>
<feature type="disulfide bond" evidence="2">
    <location>
        <begin position="297"/>
        <end position="350"/>
    </location>
</feature>
<feature type="disulfide bond" evidence="2">
    <location>
        <begin position="335"/>
        <end position="339"/>
    </location>
</feature>
<reference evidence="5" key="1">
    <citation type="submission" date="2010-06" db="EMBL/GenBank/DDBJ databases">
        <title>Molecular cloning and characterization of sensory neuron membrane protein-1 (SNMP-1) from the diamondback moth, Plutella xylostella.</title>
        <authorList>
            <person name="Li P.Y."/>
            <person name="Zhu D."/>
            <person name="Wang J."/>
            <person name="Qin Y.C."/>
        </authorList>
    </citation>
    <scope>NUCLEOTIDE SEQUENCE [MRNA]</scope>
    <source>
        <tissue evidence="5">Antenna</tissue>
    </source>
</reference>
<accession>E2IHA6</accession>
<organism>
    <name type="scientific">Plutella xylostella</name>
    <name type="common">Diamondback moth</name>
    <name type="synonym">Plutella maculipennis</name>
    <dbReference type="NCBI Taxonomy" id="51655"/>
    <lineage>
        <taxon>Eukaryota</taxon>
        <taxon>Metazoa</taxon>
        <taxon>Ecdysozoa</taxon>
        <taxon>Arthropoda</taxon>
        <taxon>Hexapoda</taxon>
        <taxon>Insecta</taxon>
        <taxon>Pterygota</taxon>
        <taxon>Neoptera</taxon>
        <taxon>Endopterygota</taxon>
        <taxon>Lepidoptera</taxon>
        <taxon>Glossata</taxon>
        <taxon>Ditrysia</taxon>
        <taxon>Yponomeutoidea</taxon>
        <taxon>Plutellidae</taxon>
        <taxon>Plutella</taxon>
    </lineage>
</organism>
<gene>
    <name evidence="5" type="primary">SNMP1</name>
</gene>